<keyword id="KW-0049">Antioxidant</keyword>
<keyword id="KW-0186">Copper</keyword>
<keyword id="KW-0963">Cytoplasm</keyword>
<keyword id="KW-1015">Disulfide bond</keyword>
<keyword id="KW-0479">Metal-binding</keyword>
<keyword id="KW-0560">Oxidoreductase</keyword>
<keyword id="KW-0862">Zinc</keyword>
<gene>
    <name type="primary">sodC</name>
</gene>
<name>SODC_ASPJA</name>
<organism>
    <name type="scientific">Aspergillus japonicus</name>
    <dbReference type="NCBI Taxonomy" id="34381"/>
    <lineage>
        <taxon>Eukaryota</taxon>
        <taxon>Fungi</taxon>
        <taxon>Dikarya</taxon>
        <taxon>Ascomycota</taxon>
        <taxon>Pezizomycotina</taxon>
        <taxon>Eurotiomycetes</taxon>
        <taxon>Eurotiomycetidae</taxon>
        <taxon>Eurotiales</taxon>
        <taxon>Aspergillaceae</taxon>
        <taxon>Aspergillus</taxon>
        <taxon>Aspergillus subgen. Circumdati</taxon>
    </lineage>
</organism>
<accession>Q12548</accession>
<feature type="chain" id="PRO_0000164109" description="Superoxide dismutase [Cu-Zn]">
    <location>
        <begin position="1" status="less than"/>
        <end position="120"/>
    </location>
</feature>
<feature type="region of interest" description="Disordered" evidence="4">
    <location>
        <begin position="16"/>
        <end position="52"/>
    </location>
</feature>
<feature type="compositionally biased region" description="Basic and acidic residues" evidence="4">
    <location>
        <begin position="33"/>
        <end position="47"/>
    </location>
</feature>
<feature type="binding site" evidence="2">
    <location>
        <position position="11"/>
    </location>
    <ligand>
        <name>Cu cation</name>
        <dbReference type="ChEBI" id="CHEBI:23378"/>
        <note>catalytic</note>
    </ligand>
</feature>
<feature type="binding site" evidence="2">
    <location>
        <position position="13"/>
    </location>
    <ligand>
        <name>Cu cation</name>
        <dbReference type="ChEBI" id="CHEBI:23378"/>
        <note>catalytic</note>
    </ligand>
</feature>
<feature type="binding site" evidence="2">
    <location>
        <position position="28"/>
    </location>
    <ligand>
        <name>Cu cation</name>
        <dbReference type="ChEBI" id="CHEBI:23378"/>
        <note>catalytic</note>
    </ligand>
</feature>
<feature type="binding site" evidence="2">
    <location>
        <position position="28"/>
    </location>
    <ligand>
        <name>Zn(2+)</name>
        <dbReference type="ChEBI" id="CHEBI:29105"/>
        <note>structural</note>
    </ligand>
</feature>
<feature type="binding site" evidence="2">
    <location>
        <position position="36"/>
    </location>
    <ligand>
        <name>Zn(2+)</name>
        <dbReference type="ChEBI" id="CHEBI:29105"/>
        <note>structural</note>
    </ligand>
</feature>
<feature type="binding site" evidence="2">
    <location>
        <position position="45"/>
    </location>
    <ligand>
        <name>Zn(2+)</name>
        <dbReference type="ChEBI" id="CHEBI:29105"/>
        <note>structural</note>
    </ligand>
</feature>
<feature type="binding site" evidence="2">
    <location>
        <position position="48"/>
    </location>
    <ligand>
        <name>Zn(2+)</name>
        <dbReference type="ChEBI" id="CHEBI:29105"/>
        <note>structural</note>
    </ligand>
</feature>
<feature type="binding site" evidence="2">
    <location>
        <position position="85"/>
    </location>
    <ligand>
        <name>Cu cation</name>
        <dbReference type="ChEBI" id="CHEBI:23378"/>
        <note>catalytic</note>
    </ligand>
</feature>
<feature type="disulfide bond" evidence="2">
    <location>
        <begin position="22"/>
        <end position="112"/>
    </location>
</feature>
<feature type="non-terminal residue">
    <location>
        <position position="1"/>
    </location>
</feature>
<proteinExistence type="inferred from homology"/>
<protein>
    <recommendedName>
        <fullName>Superoxide dismutase [Cu-Zn]</fullName>
        <ecNumber evidence="3">1.15.1.1</ecNumber>
    </recommendedName>
</protein>
<comment type="function">
    <text evidence="1">Destroys radicals which are normally produced within the cells and which are toxic to biological systems.</text>
</comment>
<comment type="catalytic activity">
    <reaction evidence="3">
        <text>2 superoxide + 2 H(+) = H2O2 + O2</text>
        <dbReference type="Rhea" id="RHEA:20696"/>
        <dbReference type="ChEBI" id="CHEBI:15378"/>
        <dbReference type="ChEBI" id="CHEBI:15379"/>
        <dbReference type="ChEBI" id="CHEBI:16240"/>
        <dbReference type="ChEBI" id="CHEBI:18421"/>
        <dbReference type="EC" id="1.15.1.1"/>
    </reaction>
</comment>
<comment type="cofactor">
    <cofactor evidence="2">
        <name>Cu cation</name>
        <dbReference type="ChEBI" id="CHEBI:23378"/>
    </cofactor>
    <text evidence="2">Binds 1 copper ion per subunit.</text>
</comment>
<comment type="cofactor">
    <cofactor evidence="2">
        <name>Zn(2+)</name>
        <dbReference type="ChEBI" id="CHEBI:29105"/>
    </cofactor>
    <text evidence="2">Binds 1 zinc ion per subunit.</text>
</comment>
<comment type="subunit">
    <text evidence="3">Homodimer.</text>
</comment>
<comment type="subcellular location">
    <subcellularLocation>
        <location evidence="2">Cytoplasm</location>
    </subcellularLocation>
</comment>
<comment type="similarity">
    <text evidence="5">Belongs to the Cu-Zn superoxide dismutase family.</text>
</comment>
<sequence>NSSSVPLHGFHVHALGDTTNGCMSTGPHFNPTGKEHGAPQDENRHAGDLGNITAGADGVANVNVSDSQIPLTGAHSIIGRAVVVHADPDDLGKGGHELSKTTGNSNSSMDSCAHGIQGIL</sequence>
<dbReference type="EC" id="1.15.1.1" evidence="3"/>
<dbReference type="EMBL" id="L32834">
    <property type="protein sequence ID" value="AAA87597.1"/>
    <property type="molecule type" value="Genomic_DNA"/>
</dbReference>
<dbReference type="SMR" id="Q12548"/>
<dbReference type="GO" id="GO:0005737">
    <property type="term" value="C:cytoplasm"/>
    <property type="evidence" value="ECO:0007669"/>
    <property type="project" value="UniProtKB-SubCell"/>
</dbReference>
<dbReference type="GO" id="GO:0005507">
    <property type="term" value="F:copper ion binding"/>
    <property type="evidence" value="ECO:0007669"/>
    <property type="project" value="InterPro"/>
</dbReference>
<dbReference type="GO" id="GO:0004784">
    <property type="term" value="F:superoxide dismutase activity"/>
    <property type="evidence" value="ECO:0007669"/>
    <property type="project" value="UniProtKB-EC"/>
</dbReference>
<dbReference type="CDD" id="cd00305">
    <property type="entry name" value="Cu-Zn_Superoxide_Dismutase"/>
    <property type="match status" value="1"/>
</dbReference>
<dbReference type="Gene3D" id="2.60.40.200">
    <property type="entry name" value="Superoxide dismutase, copper/zinc binding domain"/>
    <property type="match status" value="1"/>
</dbReference>
<dbReference type="InterPro" id="IPR036423">
    <property type="entry name" value="SOD-like_Cu/Zn_dom_sf"/>
</dbReference>
<dbReference type="InterPro" id="IPR024134">
    <property type="entry name" value="SOD_Cu/Zn_/chaperone"/>
</dbReference>
<dbReference type="InterPro" id="IPR018152">
    <property type="entry name" value="SOD_Cu/Zn_BS"/>
</dbReference>
<dbReference type="InterPro" id="IPR001424">
    <property type="entry name" value="SOD_Cu_Zn_dom"/>
</dbReference>
<dbReference type="PANTHER" id="PTHR10003">
    <property type="entry name" value="SUPEROXIDE DISMUTASE CU-ZN -RELATED"/>
    <property type="match status" value="1"/>
</dbReference>
<dbReference type="Pfam" id="PF00080">
    <property type="entry name" value="Sod_Cu"/>
    <property type="match status" value="1"/>
</dbReference>
<dbReference type="PRINTS" id="PR00068">
    <property type="entry name" value="CUZNDISMTASE"/>
</dbReference>
<dbReference type="SUPFAM" id="SSF49329">
    <property type="entry name" value="Cu,Zn superoxide dismutase-like"/>
    <property type="match status" value="1"/>
</dbReference>
<dbReference type="PROSITE" id="PS00087">
    <property type="entry name" value="SOD_CU_ZN_1"/>
    <property type="match status" value="1"/>
</dbReference>
<evidence type="ECO:0000250" key="1">
    <source>
        <dbReference type="UniProtKB" id="P00442"/>
    </source>
</evidence>
<evidence type="ECO:0000250" key="2">
    <source>
        <dbReference type="UniProtKB" id="P00445"/>
    </source>
</evidence>
<evidence type="ECO:0000250" key="3">
    <source>
        <dbReference type="UniProtKB" id="P85978"/>
    </source>
</evidence>
<evidence type="ECO:0000256" key="4">
    <source>
        <dbReference type="SAM" id="MobiDB-lite"/>
    </source>
</evidence>
<evidence type="ECO:0000305" key="5"/>
<reference key="1">
    <citation type="journal article" date="1994" name="Taiwania">
        <title>Cloning and characterization of a copper/zinc-superoxide dismutase gene from Aspergillus japonicus.</title>
        <authorList>
            <person name="Lin C.T."/>
            <person name="Lin M.T."/>
            <person name="Sheu D.C."/>
            <person name="Duan K.J."/>
        </authorList>
    </citation>
    <scope>NUCLEOTIDE SEQUENCE [GENOMIC DNA]</scope>
</reference>